<accession>P66815</accession>
<accession>Q99S72</accession>
<dbReference type="EC" id="2.3.1.286" evidence="1 2 3"/>
<dbReference type="EMBL" id="BA000017">
    <property type="protein sequence ID" value="BAB58359.1"/>
    <property type="molecule type" value="Genomic_DNA"/>
</dbReference>
<dbReference type="SMR" id="P66815"/>
<dbReference type="KEGG" id="sav:SAV2197"/>
<dbReference type="HOGENOM" id="CLU_023643_3_0_9"/>
<dbReference type="PhylomeDB" id="P66815"/>
<dbReference type="Proteomes" id="UP000002481">
    <property type="component" value="Chromosome"/>
</dbReference>
<dbReference type="GO" id="GO:0005737">
    <property type="term" value="C:cytoplasm"/>
    <property type="evidence" value="ECO:0007669"/>
    <property type="project" value="UniProtKB-SubCell"/>
</dbReference>
<dbReference type="GO" id="GO:0017136">
    <property type="term" value="F:histone deacetylase activity, NAD-dependent"/>
    <property type="evidence" value="ECO:0007669"/>
    <property type="project" value="TreeGrafter"/>
</dbReference>
<dbReference type="GO" id="GO:0070403">
    <property type="term" value="F:NAD+ binding"/>
    <property type="evidence" value="ECO:0007669"/>
    <property type="project" value="UniProtKB-UniRule"/>
</dbReference>
<dbReference type="GO" id="GO:0034979">
    <property type="term" value="F:NAD-dependent protein lysine deacetylase activity"/>
    <property type="evidence" value="ECO:0000314"/>
    <property type="project" value="UniProtKB"/>
</dbReference>
<dbReference type="GO" id="GO:0008270">
    <property type="term" value="F:zinc ion binding"/>
    <property type="evidence" value="ECO:0007669"/>
    <property type="project" value="UniProtKB-UniRule"/>
</dbReference>
<dbReference type="GO" id="GO:0006476">
    <property type="term" value="P:protein deacetylation"/>
    <property type="evidence" value="ECO:0000314"/>
    <property type="project" value="UniProtKB"/>
</dbReference>
<dbReference type="CDD" id="cd01411">
    <property type="entry name" value="SIR2H"/>
    <property type="match status" value="1"/>
</dbReference>
<dbReference type="Gene3D" id="3.30.1600.10">
    <property type="entry name" value="SIR2/SIRT2 'Small Domain"/>
    <property type="match status" value="1"/>
</dbReference>
<dbReference type="Gene3D" id="3.40.50.1220">
    <property type="entry name" value="TPP-binding domain"/>
    <property type="match status" value="1"/>
</dbReference>
<dbReference type="HAMAP" id="MF_01968">
    <property type="entry name" value="Sirtuin_ClassU"/>
    <property type="match status" value="1"/>
</dbReference>
<dbReference type="InterPro" id="IPR029035">
    <property type="entry name" value="DHS-like_NAD/FAD-binding_dom"/>
</dbReference>
<dbReference type="InterPro" id="IPR050134">
    <property type="entry name" value="NAD-dep_sirtuin_deacylases"/>
</dbReference>
<dbReference type="InterPro" id="IPR003000">
    <property type="entry name" value="Sirtuin"/>
</dbReference>
<dbReference type="InterPro" id="IPR026591">
    <property type="entry name" value="Sirtuin_cat_small_dom_sf"/>
</dbReference>
<dbReference type="InterPro" id="IPR028628">
    <property type="entry name" value="Sirtuin_class_U"/>
</dbReference>
<dbReference type="InterPro" id="IPR026590">
    <property type="entry name" value="Ssirtuin_cat_dom"/>
</dbReference>
<dbReference type="NCBIfam" id="NF001752">
    <property type="entry name" value="PRK00481.1-1"/>
    <property type="match status" value="1"/>
</dbReference>
<dbReference type="PANTHER" id="PTHR11085:SF4">
    <property type="entry name" value="NAD-DEPENDENT PROTEIN DEACYLASE"/>
    <property type="match status" value="1"/>
</dbReference>
<dbReference type="PANTHER" id="PTHR11085">
    <property type="entry name" value="NAD-DEPENDENT PROTEIN DEACYLASE SIRTUIN-5, MITOCHONDRIAL-RELATED"/>
    <property type="match status" value="1"/>
</dbReference>
<dbReference type="Pfam" id="PF02146">
    <property type="entry name" value="SIR2"/>
    <property type="match status" value="1"/>
</dbReference>
<dbReference type="SUPFAM" id="SSF52467">
    <property type="entry name" value="DHS-like NAD/FAD-binding domain"/>
    <property type="match status" value="1"/>
</dbReference>
<dbReference type="PROSITE" id="PS50305">
    <property type="entry name" value="SIRTUIN"/>
    <property type="match status" value="1"/>
</dbReference>
<organism>
    <name type="scientific">Staphylococcus aureus (strain Mu50 / ATCC 700699)</name>
    <dbReference type="NCBI Taxonomy" id="158878"/>
    <lineage>
        <taxon>Bacteria</taxon>
        <taxon>Bacillati</taxon>
        <taxon>Bacillota</taxon>
        <taxon>Bacilli</taxon>
        <taxon>Bacillales</taxon>
        <taxon>Staphylococcaceae</taxon>
        <taxon>Staphylococcus</taxon>
    </lineage>
</organism>
<gene>
    <name evidence="1 4" type="primary">cobB</name>
    <name type="ordered locus">SAV2197</name>
</gene>
<protein>
    <recommendedName>
        <fullName evidence="1 5">NAD-dependent protein deacetylase</fullName>
        <ecNumber evidence="1 2 3">2.3.1.286</ecNumber>
    </recommendedName>
    <alternativeName>
        <fullName evidence="1">Regulatory protein SIR2 homolog</fullName>
    </alternativeName>
</protein>
<feature type="chain" id="PRO_0000110351" description="NAD-dependent protein deacetylase">
    <location>
        <begin position="1"/>
        <end position="243"/>
    </location>
</feature>
<feature type="domain" description="Deacetylase sirtuin-type" evidence="2">
    <location>
        <begin position="1"/>
        <end position="243"/>
    </location>
</feature>
<feature type="active site" description="Proton acceptor" evidence="2 5">
    <location>
        <position position="123"/>
    </location>
</feature>
<feature type="binding site" evidence="1">
    <location>
        <position position="24"/>
    </location>
    <ligand>
        <name>NAD(+)</name>
        <dbReference type="ChEBI" id="CHEBI:57540"/>
    </ligand>
</feature>
<feature type="binding site" evidence="1">
    <location>
        <position position="35"/>
    </location>
    <ligand>
        <name>NAD(+)</name>
        <dbReference type="ChEBI" id="CHEBI:57540"/>
    </ligand>
</feature>
<feature type="binding site" evidence="1">
    <location>
        <position position="35"/>
    </location>
    <ligand>
        <name>nicotinamide</name>
        <dbReference type="ChEBI" id="CHEBI:17154"/>
    </ligand>
</feature>
<feature type="binding site" evidence="1">
    <location>
        <position position="36"/>
    </location>
    <ligand>
        <name>NAD(+)</name>
        <dbReference type="ChEBI" id="CHEBI:57540"/>
    </ligand>
</feature>
<feature type="binding site" evidence="1">
    <location>
        <position position="105"/>
    </location>
    <ligand>
        <name>NAD(+)</name>
        <dbReference type="ChEBI" id="CHEBI:57540"/>
    </ligand>
</feature>
<feature type="binding site" evidence="1">
    <location>
        <position position="107"/>
    </location>
    <ligand>
        <name>NAD(+)</name>
        <dbReference type="ChEBI" id="CHEBI:57540"/>
    </ligand>
</feature>
<feature type="binding site" evidence="1">
    <location>
        <position position="107"/>
    </location>
    <ligand>
        <name>nicotinamide</name>
        <dbReference type="ChEBI" id="CHEBI:17154"/>
    </ligand>
</feature>
<feature type="binding site" evidence="1">
    <location>
        <position position="108"/>
    </location>
    <ligand>
        <name>NAD(+)</name>
        <dbReference type="ChEBI" id="CHEBI:57540"/>
    </ligand>
</feature>
<feature type="binding site" evidence="1">
    <location>
        <position position="108"/>
    </location>
    <ligand>
        <name>nicotinamide</name>
        <dbReference type="ChEBI" id="CHEBI:17154"/>
    </ligand>
</feature>
<feature type="binding site" evidence="1">
    <location>
        <position position="123"/>
    </location>
    <ligand>
        <name>NAD(+)</name>
        <dbReference type="ChEBI" id="CHEBI:57540"/>
    </ligand>
</feature>
<feature type="binding site" evidence="1">
    <location>
        <position position="131"/>
    </location>
    <ligand>
        <name>Zn(2+)</name>
        <dbReference type="ChEBI" id="CHEBI:29105"/>
    </ligand>
</feature>
<feature type="binding site" evidence="1">
    <location>
        <position position="134"/>
    </location>
    <ligand>
        <name>Zn(2+)</name>
        <dbReference type="ChEBI" id="CHEBI:29105"/>
    </ligand>
</feature>
<feature type="binding site" evidence="1">
    <location>
        <position position="151"/>
    </location>
    <ligand>
        <name>Zn(2+)</name>
        <dbReference type="ChEBI" id="CHEBI:29105"/>
    </ligand>
</feature>
<feature type="binding site" evidence="1">
    <location>
        <position position="154"/>
    </location>
    <ligand>
        <name>Zn(2+)</name>
        <dbReference type="ChEBI" id="CHEBI:29105"/>
    </ligand>
</feature>
<feature type="binding site" evidence="1">
    <location>
        <position position="192"/>
    </location>
    <ligand>
        <name>NAD(+)</name>
        <dbReference type="ChEBI" id="CHEBI:57540"/>
    </ligand>
</feature>
<feature type="binding site" evidence="1">
    <location>
        <position position="193"/>
    </location>
    <ligand>
        <name>NAD(+)</name>
        <dbReference type="ChEBI" id="CHEBI:57540"/>
    </ligand>
</feature>
<feature type="binding site" evidence="1">
    <location>
        <position position="215"/>
    </location>
    <ligand>
        <name>NAD(+)</name>
        <dbReference type="ChEBI" id="CHEBI:57540"/>
    </ligand>
</feature>
<feature type="binding site" evidence="1">
    <location>
        <position position="232"/>
    </location>
    <ligand>
        <name>NAD(+)</name>
        <dbReference type="ChEBI" id="CHEBI:57540"/>
    </ligand>
</feature>
<feature type="mutagenesis site" description="Loss of enzymatic activity." evidence="3">
    <original>H</original>
    <variation>Y</variation>
    <location>
        <position position="123"/>
    </location>
</feature>
<comment type="function">
    <text evidence="1 3">NAD-dependent protein deacetylase which modulates the activities of several enzymes which are inactive in their acetylated form.</text>
</comment>
<comment type="catalytic activity">
    <reaction evidence="1 3">
        <text>N(6)-acetyl-L-lysyl-[protein] + NAD(+) + H2O = 2''-O-acetyl-ADP-D-ribose + nicotinamide + L-lysyl-[protein]</text>
        <dbReference type="Rhea" id="RHEA:43636"/>
        <dbReference type="Rhea" id="RHEA-COMP:9752"/>
        <dbReference type="Rhea" id="RHEA-COMP:10731"/>
        <dbReference type="ChEBI" id="CHEBI:15377"/>
        <dbReference type="ChEBI" id="CHEBI:17154"/>
        <dbReference type="ChEBI" id="CHEBI:29969"/>
        <dbReference type="ChEBI" id="CHEBI:57540"/>
        <dbReference type="ChEBI" id="CHEBI:61930"/>
        <dbReference type="ChEBI" id="CHEBI:83767"/>
        <dbReference type="EC" id="2.3.1.286"/>
    </reaction>
</comment>
<comment type="cofactor">
    <cofactor evidence="1">
        <name>Zn(2+)</name>
        <dbReference type="ChEBI" id="CHEBI:29105"/>
    </cofactor>
    <text evidence="1">Binds 1 zinc ion per subunit.</text>
</comment>
<comment type="subcellular location">
    <subcellularLocation>
        <location evidence="1">Cytoplasm</location>
    </subcellularLocation>
</comment>
<comment type="similarity">
    <text evidence="1">Belongs to the sirtuin family. Class U subfamily.</text>
</comment>
<reference key="1">
    <citation type="journal article" date="2001" name="Lancet">
        <title>Whole genome sequencing of meticillin-resistant Staphylococcus aureus.</title>
        <authorList>
            <person name="Kuroda M."/>
            <person name="Ohta T."/>
            <person name="Uchiyama I."/>
            <person name="Baba T."/>
            <person name="Yuzawa H."/>
            <person name="Kobayashi I."/>
            <person name="Cui L."/>
            <person name="Oguchi A."/>
            <person name="Aoki K."/>
            <person name="Nagai Y."/>
            <person name="Lian J.-Q."/>
            <person name="Ito T."/>
            <person name="Kanamori M."/>
            <person name="Matsumaru H."/>
            <person name="Maruyama A."/>
            <person name="Murakami H."/>
            <person name="Hosoyama A."/>
            <person name="Mizutani-Ui Y."/>
            <person name="Takahashi N.K."/>
            <person name="Sawano T."/>
            <person name="Inoue R."/>
            <person name="Kaito C."/>
            <person name="Sekimizu K."/>
            <person name="Hirakawa H."/>
            <person name="Kuhara S."/>
            <person name="Goto S."/>
            <person name="Yabuzaki J."/>
            <person name="Kanehisa M."/>
            <person name="Yamashita A."/>
            <person name="Oshima K."/>
            <person name="Furuya K."/>
            <person name="Yoshino C."/>
            <person name="Shiba T."/>
            <person name="Hattori M."/>
            <person name="Ogasawara N."/>
            <person name="Hayashi H."/>
            <person name="Hiramatsu K."/>
        </authorList>
    </citation>
    <scope>NUCLEOTIDE SEQUENCE [LARGE SCALE GENOMIC DNA]</scope>
    <source>
        <strain>Mu50 / ATCC 700699</strain>
    </source>
</reference>
<reference key="2">
    <citation type="journal article" date="2015" name="Mol. Cell">
        <title>Identification of a class of protein ADP-ribosylating sirtuins in microbial pathogens.</title>
        <authorList>
            <person name="Rack J.G."/>
            <person name="Morra R."/>
            <person name="Barkauskaite E."/>
            <person name="Kraehenbuehl R."/>
            <person name="Ariza A."/>
            <person name="Qu Y."/>
            <person name="Ortmayer M."/>
            <person name="Leidecker O."/>
            <person name="Cameron D.R."/>
            <person name="Matic I."/>
            <person name="Peleg A.Y."/>
            <person name="Leys D."/>
            <person name="Traven A."/>
            <person name="Ahel I."/>
        </authorList>
    </citation>
    <scope>FUNCTION</scope>
    <scope>CATALYTIC ACTIVITY</scope>
    <scope>MUTAGENESIS OF HIS-123</scope>
    <source>
        <strain>Mu50 / ATCC 700699</strain>
    </source>
</reference>
<sequence length="243" mass="27026">MRNDLETLKHIIDSSNRITFFTGAGVSVASGVPDFRSMGGLFDEISKDGLSPEYLLSRDYLEDDPEGFINFCHKRLLFVDTKPNIVHDWIAKLERNQQSLGVITQNIDGLHSDAGSQHVDELHGTLNRFYCNACHKSYTKSDVIDRTLKHCDNCGGAIRPDIVLYGEMLDQPTIIRALNKIEHADTLVVLGSSLVVQPAAGLISHFKGDNLIIINKDRTPYDSDATLVIHDDMVSVVKSLMTE</sequence>
<proteinExistence type="evidence at protein level"/>
<keyword id="KW-0963">Cytoplasm</keyword>
<keyword id="KW-0479">Metal-binding</keyword>
<keyword id="KW-0520">NAD</keyword>
<keyword id="KW-0808">Transferase</keyword>
<keyword id="KW-0862">Zinc</keyword>
<name>NPD_STAAM</name>
<evidence type="ECO:0000255" key="1">
    <source>
        <dbReference type="HAMAP-Rule" id="MF_01968"/>
    </source>
</evidence>
<evidence type="ECO:0000255" key="2">
    <source>
        <dbReference type="PROSITE-ProRule" id="PRU00236"/>
    </source>
</evidence>
<evidence type="ECO:0000269" key="3">
    <source>
    </source>
</evidence>
<evidence type="ECO:0000303" key="4">
    <source>
    </source>
</evidence>
<evidence type="ECO:0000305" key="5">
    <source>
    </source>
</evidence>